<evidence type="ECO:0000255" key="1">
    <source>
        <dbReference type="HAMAP-Rule" id="MF_00457"/>
    </source>
</evidence>
<accession>B2A8L8</accession>
<organism>
    <name type="scientific">Natranaerobius thermophilus (strain ATCC BAA-1301 / DSM 18059 / JW/NM-WN-LF)</name>
    <dbReference type="NCBI Taxonomy" id="457570"/>
    <lineage>
        <taxon>Bacteria</taxon>
        <taxon>Bacillati</taxon>
        <taxon>Bacillota</taxon>
        <taxon>Clostridia</taxon>
        <taxon>Natranaerobiales</taxon>
        <taxon>Natranaerobiaceae</taxon>
        <taxon>Natranaerobius</taxon>
    </lineage>
</organism>
<keyword id="KW-0378">Hydrolase</keyword>
<keyword id="KW-1185">Reference proteome</keyword>
<protein>
    <recommendedName>
        <fullName evidence="1">UPF0173 metal-dependent hydrolase Nther_2337</fullName>
    </recommendedName>
</protein>
<feature type="chain" id="PRO_0000367193" description="UPF0173 metal-dependent hydrolase Nther_2337">
    <location>
        <begin position="1"/>
        <end position="222"/>
    </location>
</feature>
<reference key="1">
    <citation type="submission" date="2008-04" db="EMBL/GenBank/DDBJ databases">
        <title>Complete sequence of chromosome of Natranaerobius thermophilus JW/NM-WN-LF.</title>
        <authorList>
            <consortium name="US DOE Joint Genome Institute"/>
            <person name="Copeland A."/>
            <person name="Lucas S."/>
            <person name="Lapidus A."/>
            <person name="Glavina del Rio T."/>
            <person name="Dalin E."/>
            <person name="Tice H."/>
            <person name="Bruce D."/>
            <person name="Goodwin L."/>
            <person name="Pitluck S."/>
            <person name="Chertkov O."/>
            <person name="Brettin T."/>
            <person name="Detter J.C."/>
            <person name="Han C."/>
            <person name="Kuske C.R."/>
            <person name="Schmutz J."/>
            <person name="Larimer F."/>
            <person name="Land M."/>
            <person name="Hauser L."/>
            <person name="Kyrpides N."/>
            <person name="Lykidis A."/>
            <person name="Mesbah N.M."/>
            <person name="Wiegel J."/>
        </authorList>
    </citation>
    <scope>NUCLEOTIDE SEQUENCE [LARGE SCALE GENOMIC DNA]</scope>
    <source>
        <strain>ATCC BAA-1301 / DSM 18059 / JW/NM-WN-LF</strain>
    </source>
</reference>
<dbReference type="EMBL" id="CP001034">
    <property type="protein sequence ID" value="ACB85902.1"/>
    <property type="molecule type" value="Genomic_DNA"/>
</dbReference>
<dbReference type="RefSeq" id="WP_012448752.1">
    <property type="nucleotide sequence ID" value="NC_010718.1"/>
</dbReference>
<dbReference type="SMR" id="B2A8L8"/>
<dbReference type="FunCoup" id="B2A8L8">
    <property type="interactions" value="28"/>
</dbReference>
<dbReference type="KEGG" id="nth:Nther_2337"/>
<dbReference type="eggNOG" id="COG2220">
    <property type="taxonomic scope" value="Bacteria"/>
</dbReference>
<dbReference type="HOGENOM" id="CLU_070010_4_1_9"/>
<dbReference type="InParanoid" id="B2A8L8"/>
<dbReference type="OrthoDB" id="9789133at2"/>
<dbReference type="Proteomes" id="UP000001683">
    <property type="component" value="Chromosome"/>
</dbReference>
<dbReference type="GO" id="GO:0016787">
    <property type="term" value="F:hydrolase activity"/>
    <property type="evidence" value="ECO:0007669"/>
    <property type="project" value="UniProtKB-UniRule"/>
</dbReference>
<dbReference type="Gene3D" id="3.60.15.10">
    <property type="entry name" value="Ribonuclease Z/Hydroxyacylglutathione hydrolase-like"/>
    <property type="match status" value="1"/>
</dbReference>
<dbReference type="HAMAP" id="MF_00457">
    <property type="entry name" value="UPF0173"/>
    <property type="match status" value="1"/>
</dbReference>
<dbReference type="InterPro" id="IPR001279">
    <property type="entry name" value="Metallo-B-lactamas"/>
</dbReference>
<dbReference type="InterPro" id="IPR036866">
    <property type="entry name" value="RibonucZ/Hydroxyglut_hydro"/>
</dbReference>
<dbReference type="InterPro" id="IPR022877">
    <property type="entry name" value="UPF0173"/>
</dbReference>
<dbReference type="InterPro" id="IPR050114">
    <property type="entry name" value="UPF0173_UPF0282_UlaG_hydrolase"/>
</dbReference>
<dbReference type="NCBIfam" id="NF001911">
    <property type="entry name" value="PRK00685.1"/>
    <property type="match status" value="1"/>
</dbReference>
<dbReference type="PANTHER" id="PTHR43546:SF3">
    <property type="entry name" value="UPF0173 METAL-DEPENDENT HYDROLASE MJ1163"/>
    <property type="match status" value="1"/>
</dbReference>
<dbReference type="PANTHER" id="PTHR43546">
    <property type="entry name" value="UPF0173 METAL-DEPENDENT HYDROLASE MJ1163-RELATED"/>
    <property type="match status" value="1"/>
</dbReference>
<dbReference type="Pfam" id="PF12706">
    <property type="entry name" value="Lactamase_B_2"/>
    <property type="match status" value="1"/>
</dbReference>
<dbReference type="SMART" id="SM00849">
    <property type="entry name" value="Lactamase_B"/>
    <property type="match status" value="1"/>
</dbReference>
<dbReference type="SUPFAM" id="SSF56281">
    <property type="entry name" value="Metallo-hydrolase/oxidoreductase"/>
    <property type="match status" value="1"/>
</dbReference>
<gene>
    <name type="ordered locus">Nther_2337</name>
</gene>
<name>Y2337_NATTJ</name>
<sequence>MKLEFIGHGCVQLSEGDDKIIFDPFIDDNPVAKISSSDVSPNYILLTHYHDDHKGDALEIAKDNDSLLISTAEIAGAAEQKGVKAHPMHIGGTKEFDFGKVRVTPALHGSGIDGGLACGFVVDFHGKKVYHAGDTGLFSDMKLISELEEIDIAILPIGGNFTMGAEEAVMATQYLKPKAVMPVHYNTWPLIPADDEQFKKDIQEKTNSECFVLEPGDSMEMN</sequence>
<proteinExistence type="inferred from homology"/>
<comment type="similarity">
    <text evidence="1">Belongs to the UPF0173 family.</text>
</comment>